<keyword id="KW-0030">Aminoacyl-tRNA synthetase</keyword>
<keyword id="KW-0067">ATP-binding</keyword>
<keyword id="KW-0963">Cytoplasm</keyword>
<keyword id="KW-0436">Ligase</keyword>
<keyword id="KW-0547">Nucleotide-binding</keyword>
<keyword id="KW-0648">Protein biosynthesis</keyword>
<feature type="chain" id="PRO_0000334756" description="Leucine--tRNA ligase">
    <location>
        <begin position="1"/>
        <end position="860"/>
    </location>
</feature>
<feature type="short sequence motif" description="'HIGH' region">
    <location>
        <begin position="42"/>
        <end position="52"/>
    </location>
</feature>
<feature type="short sequence motif" description="'KMSKS' region">
    <location>
        <begin position="619"/>
        <end position="623"/>
    </location>
</feature>
<feature type="binding site" evidence="1">
    <location>
        <position position="622"/>
    </location>
    <ligand>
        <name>ATP</name>
        <dbReference type="ChEBI" id="CHEBI:30616"/>
    </ligand>
</feature>
<reference key="1">
    <citation type="journal article" date="2006" name="Proc. Natl. Acad. Sci. U.S.A.">
        <title>Identification of genes subject to positive selection in uropathogenic strains of Escherichia coli: a comparative genomics approach.</title>
        <authorList>
            <person name="Chen S.L."/>
            <person name="Hung C.-S."/>
            <person name="Xu J."/>
            <person name="Reigstad C.S."/>
            <person name="Magrini V."/>
            <person name="Sabo A."/>
            <person name="Blasiar D."/>
            <person name="Bieri T."/>
            <person name="Meyer R.R."/>
            <person name="Ozersky P."/>
            <person name="Armstrong J.R."/>
            <person name="Fulton R.S."/>
            <person name="Latreille J.P."/>
            <person name="Spieth J."/>
            <person name="Hooton T.M."/>
            <person name="Mardis E.R."/>
            <person name="Hultgren S.J."/>
            <person name="Gordon J.I."/>
        </authorList>
    </citation>
    <scope>NUCLEOTIDE SEQUENCE [LARGE SCALE GENOMIC DNA]</scope>
    <source>
        <strain>UTI89 / UPEC</strain>
    </source>
</reference>
<protein>
    <recommendedName>
        <fullName evidence="1">Leucine--tRNA ligase</fullName>
        <ecNumber evidence="1">6.1.1.4</ecNumber>
    </recommendedName>
    <alternativeName>
        <fullName evidence="1">Leucyl-tRNA synthetase</fullName>
        <shortName evidence="1">LeuRS</shortName>
    </alternativeName>
</protein>
<sequence length="860" mass="97307">MQEQYRPEEIESKVQLHWDEKRTFEVTEDESKEKYYCLSMLPYPSGRLHMGHVRNYTIGDVIARYQRMLGKNVLQPIGWDAFGLPAEGAAVKNNTAPAPWTYDNIAYMKNQLKMLGFGYDWSRELATCTPEYYRWEQKFFTELYKKGLVYKKTSAVNWCPNDQTVLANEQVIDGCCWRCDTKVERKEIPQWFIKITAYADELLNDLDKLDHWPDTVKTMQRNWIGRSEGVEITFNVKDYDNTLTVYTTRPDTFMGCTYLAVAAGHPLAQKAAENNPELAAFIDECRNTKVAEAEMATMEKKGVDTGFKAVHPLTGEEIPVWAANFVLMEYGTGAVMAVPGHDQRDYEFASKYGLNIKPVILAADGSEPDLSQQALTEKGVLFNSGEFNGLDHEAAFNAIADKLTEMGVGERKVNYRLRDWGVSRQRYWGAPIPMVTLEDGTVMPTPDDQLPVILPEDVVMDGITSPIKADPEWAKTTVNGMPALRETDTFDTFMESSWYYARYTCPEYKEGMLDSKAANYWLPVDIYIGGIEHAIMHLLYFRFFHKLMRDAGMVNSDEPAKQLLCQGMVLADAFYYVGENGERNWVSPVDAIVERDEKGRIVKAKDAAGHELVYTGMSKMSKSKNNGIDPQVMVERYGADTVRLFMMFASPADMTLEWQESGVEGANRFLKRVWKLVYEHTAKGDVAALNVDALTEDQKALRRDVHKTIAKVTDDIGRRQTFNTAIAAIMELMNKLAKAPTDGEQDRALMQEALLAVVRMLNPFTPHICFTLWQELKGEGDIDNAPWPVADEKAMVEDSTLVVVQVNGKVRAKITVPVDATEEQVRERAGQEHLVAKYLDGVTVRKVIYVPGKLLNLVVG</sequence>
<organism>
    <name type="scientific">Escherichia coli (strain UTI89 / UPEC)</name>
    <dbReference type="NCBI Taxonomy" id="364106"/>
    <lineage>
        <taxon>Bacteria</taxon>
        <taxon>Pseudomonadati</taxon>
        <taxon>Pseudomonadota</taxon>
        <taxon>Gammaproteobacteria</taxon>
        <taxon>Enterobacterales</taxon>
        <taxon>Enterobacteriaceae</taxon>
        <taxon>Escherichia</taxon>
    </lineage>
</organism>
<comment type="catalytic activity">
    <reaction evidence="1">
        <text>tRNA(Leu) + L-leucine + ATP = L-leucyl-tRNA(Leu) + AMP + diphosphate</text>
        <dbReference type="Rhea" id="RHEA:11688"/>
        <dbReference type="Rhea" id="RHEA-COMP:9613"/>
        <dbReference type="Rhea" id="RHEA-COMP:9622"/>
        <dbReference type="ChEBI" id="CHEBI:30616"/>
        <dbReference type="ChEBI" id="CHEBI:33019"/>
        <dbReference type="ChEBI" id="CHEBI:57427"/>
        <dbReference type="ChEBI" id="CHEBI:78442"/>
        <dbReference type="ChEBI" id="CHEBI:78494"/>
        <dbReference type="ChEBI" id="CHEBI:456215"/>
        <dbReference type="EC" id="6.1.1.4"/>
    </reaction>
</comment>
<comment type="subcellular location">
    <subcellularLocation>
        <location evidence="1">Cytoplasm</location>
    </subcellularLocation>
</comment>
<comment type="similarity">
    <text evidence="1">Belongs to the class-I aminoacyl-tRNA synthetase family.</text>
</comment>
<comment type="sequence caution" evidence="2">
    <conflict type="erroneous initiation">
        <sequence resource="EMBL-CDS" id="ABE06145"/>
    </conflict>
</comment>
<evidence type="ECO:0000255" key="1">
    <source>
        <dbReference type="HAMAP-Rule" id="MF_00049"/>
    </source>
</evidence>
<evidence type="ECO:0000305" key="2"/>
<dbReference type="EC" id="6.1.1.4" evidence="1"/>
<dbReference type="EMBL" id="CP000243">
    <property type="protein sequence ID" value="ABE06145.1"/>
    <property type="status" value="ALT_INIT"/>
    <property type="molecule type" value="Genomic_DNA"/>
</dbReference>
<dbReference type="RefSeq" id="WP_001362899.1">
    <property type="nucleotide sequence ID" value="NZ_CP064825.1"/>
</dbReference>
<dbReference type="SMR" id="Q1RER9"/>
<dbReference type="KEGG" id="eci:UTI89_C0645"/>
<dbReference type="HOGENOM" id="CLU_004427_0_0_6"/>
<dbReference type="Proteomes" id="UP000001952">
    <property type="component" value="Chromosome"/>
</dbReference>
<dbReference type="GO" id="GO:0005829">
    <property type="term" value="C:cytosol"/>
    <property type="evidence" value="ECO:0007669"/>
    <property type="project" value="TreeGrafter"/>
</dbReference>
<dbReference type="GO" id="GO:0002161">
    <property type="term" value="F:aminoacyl-tRNA deacylase activity"/>
    <property type="evidence" value="ECO:0007669"/>
    <property type="project" value="InterPro"/>
</dbReference>
<dbReference type="GO" id="GO:0005524">
    <property type="term" value="F:ATP binding"/>
    <property type="evidence" value="ECO:0007669"/>
    <property type="project" value="UniProtKB-UniRule"/>
</dbReference>
<dbReference type="GO" id="GO:0004823">
    <property type="term" value="F:leucine-tRNA ligase activity"/>
    <property type="evidence" value="ECO:0007669"/>
    <property type="project" value="UniProtKB-UniRule"/>
</dbReference>
<dbReference type="GO" id="GO:0006429">
    <property type="term" value="P:leucyl-tRNA aminoacylation"/>
    <property type="evidence" value="ECO:0007669"/>
    <property type="project" value="UniProtKB-UniRule"/>
</dbReference>
<dbReference type="CDD" id="cd07958">
    <property type="entry name" value="Anticodon_Ia_Leu_BEm"/>
    <property type="match status" value="1"/>
</dbReference>
<dbReference type="CDD" id="cd00812">
    <property type="entry name" value="LeuRS_core"/>
    <property type="match status" value="1"/>
</dbReference>
<dbReference type="FunFam" id="1.10.730.10:FF:000002">
    <property type="entry name" value="Leucine--tRNA ligase"/>
    <property type="match status" value="2"/>
</dbReference>
<dbReference type="FunFam" id="2.20.28.290:FF:000001">
    <property type="entry name" value="Leucine--tRNA ligase"/>
    <property type="match status" value="1"/>
</dbReference>
<dbReference type="FunFam" id="3.10.20.590:FF:000001">
    <property type="entry name" value="Leucine--tRNA ligase"/>
    <property type="match status" value="1"/>
</dbReference>
<dbReference type="FunFam" id="3.40.50.620:FF:000003">
    <property type="entry name" value="Leucine--tRNA ligase"/>
    <property type="match status" value="1"/>
</dbReference>
<dbReference type="FunFam" id="3.40.50.620:FF:000124">
    <property type="entry name" value="Leucine--tRNA ligase"/>
    <property type="match status" value="1"/>
</dbReference>
<dbReference type="FunFam" id="3.90.740.10:FF:000012">
    <property type="entry name" value="Leucine--tRNA ligase"/>
    <property type="match status" value="1"/>
</dbReference>
<dbReference type="Gene3D" id="2.20.28.290">
    <property type="match status" value="1"/>
</dbReference>
<dbReference type="Gene3D" id="3.10.20.590">
    <property type="match status" value="1"/>
</dbReference>
<dbReference type="Gene3D" id="3.40.50.620">
    <property type="entry name" value="HUPs"/>
    <property type="match status" value="2"/>
</dbReference>
<dbReference type="Gene3D" id="1.10.730.10">
    <property type="entry name" value="Isoleucyl-tRNA Synthetase, Domain 1"/>
    <property type="match status" value="1"/>
</dbReference>
<dbReference type="HAMAP" id="MF_00049_B">
    <property type="entry name" value="Leu_tRNA_synth_B"/>
    <property type="match status" value="1"/>
</dbReference>
<dbReference type="InterPro" id="IPR001412">
    <property type="entry name" value="aa-tRNA-synth_I_CS"/>
</dbReference>
<dbReference type="InterPro" id="IPR002300">
    <property type="entry name" value="aa-tRNA-synth_Ia"/>
</dbReference>
<dbReference type="InterPro" id="IPR002302">
    <property type="entry name" value="Leu-tRNA-ligase"/>
</dbReference>
<dbReference type="InterPro" id="IPR025709">
    <property type="entry name" value="Leu_tRNA-synth_edit"/>
</dbReference>
<dbReference type="InterPro" id="IPR013155">
    <property type="entry name" value="M/V/L/I-tRNA-synth_anticd-bd"/>
</dbReference>
<dbReference type="InterPro" id="IPR015413">
    <property type="entry name" value="Methionyl/Leucyl_tRNA_Synth"/>
</dbReference>
<dbReference type="InterPro" id="IPR014729">
    <property type="entry name" value="Rossmann-like_a/b/a_fold"/>
</dbReference>
<dbReference type="InterPro" id="IPR009080">
    <property type="entry name" value="tRNAsynth_Ia_anticodon-bd"/>
</dbReference>
<dbReference type="InterPro" id="IPR009008">
    <property type="entry name" value="Val/Leu/Ile-tRNA-synth_edit"/>
</dbReference>
<dbReference type="NCBIfam" id="TIGR00396">
    <property type="entry name" value="leuS_bact"/>
    <property type="match status" value="1"/>
</dbReference>
<dbReference type="PANTHER" id="PTHR43740:SF2">
    <property type="entry name" value="LEUCINE--TRNA LIGASE, MITOCHONDRIAL"/>
    <property type="match status" value="1"/>
</dbReference>
<dbReference type="PANTHER" id="PTHR43740">
    <property type="entry name" value="LEUCYL-TRNA SYNTHETASE"/>
    <property type="match status" value="1"/>
</dbReference>
<dbReference type="Pfam" id="PF08264">
    <property type="entry name" value="Anticodon_1"/>
    <property type="match status" value="1"/>
</dbReference>
<dbReference type="Pfam" id="PF00133">
    <property type="entry name" value="tRNA-synt_1"/>
    <property type="match status" value="2"/>
</dbReference>
<dbReference type="Pfam" id="PF13603">
    <property type="entry name" value="tRNA-synt_1_2"/>
    <property type="match status" value="1"/>
</dbReference>
<dbReference type="Pfam" id="PF09334">
    <property type="entry name" value="tRNA-synt_1g"/>
    <property type="match status" value="1"/>
</dbReference>
<dbReference type="PRINTS" id="PR00985">
    <property type="entry name" value="TRNASYNTHLEU"/>
</dbReference>
<dbReference type="SUPFAM" id="SSF47323">
    <property type="entry name" value="Anticodon-binding domain of a subclass of class I aminoacyl-tRNA synthetases"/>
    <property type="match status" value="1"/>
</dbReference>
<dbReference type="SUPFAM" id="SSF52374">
    <property type="entry name" value="Nucleotidylyl transferase"/>
    <property type="match status" value="1"/>
</dbReference>
<dbReference type="SUPFAM" id="SSF50677">
    <property type="entry name" value="ValRS/IleRS/LeuRS editing domain"/>
    <property type="match status" value="1"/>
</dbReference>
<dbReference type="PROSITE" id="PS00178">
    <property type="entry name" value="AA_TRNA_LIGASE_I"/>
    <property type="match status" value="1"/>
</dbReference>
<accession>Q1RER9</accession>
<gene>
    <name evidence="1" type="primary">leuS</name>
    <name type="ordered locus">UTI89_C0645</name>
</gene>
<name>SYL_ECOUT</name>
<proteinExistence type="inferred from homology"/>